<dbReference type="EMBL" id="CP000453">
    <property type="protein sequence ID" value="ABI56795.1"/>
    <property type="molecule type" value="Genomic_DNA"/>
</dbReference>
<dbReference type="RefSeq" id="WP_011629190.1">
    <property type="nucleotide sequence ID" value="NC_008340.1"/>
</dbReference>
<dbReference type="SMR" id="Q0A8P2"/>
<dbReference type="KEGG" id="aeh:Mlg_1446"/>
<dbReference type="eggNOG" id="COG0361">
    <property type="taxonomic scope" value="Bacteria"/>
</dbReference>
<dbReference type="HOGENOM" id="CLU_151267_1_0_6"/>
<dbReference type="OrthoDB" id="9803250at2"/>
<dbReference type="Proteomes" id="UP000001962">
    <property type="component" value="Chromosome"/>
</dbReference>
<dbReference type="GO" id="GO:0005829">
    <property type="term" value="C:cytosol"/>
    <property type="evidence" value="ECO:0007669"/>
    <property type="project" value="TreeGrafter"/>
</dbReference>
<dbReference type="GO" id="GO:0043022">
    <property type="term" value="F:ribosome binding"/>
    <property type="evidence" value="ECO:0007669"/>
    <property type="project" value="UniProtKB-UniRule"/>
</dbReference>
<dbReference type="GO" id="GO:0019843">
    <property type="term" value="F:rRNA binding"/>
    <property type="evidence" value="ECO:0007669"/>
    <property type="project" value="UniProtKB-UniRule"/>
</dbReference>
<dbReference type="GO" id="GO:0003743">
    <property type="term" value="F:translation initiation factor activity"/>
    <property type="evidence" value="ECO:0007669"/>
    <property type="project" value="UniProtKB-UniRule"/>
</dbReference>
<dbReference type="CDD" id="cd04451">
    <property type="entry name" value="S1_IF1"/>
    <property type="match status" value="1"/>
</dbReference>
<dbReference type="FunFam" id="2.40.50.140:FF:000002">
    <property type="entry name" value="Translation initiation factor IF-1"/>
    <property type="match status" value="1"/>
</dbReference>
<dbReference type="Gene3D" id="2.40.50.140">
    <property type="entry name" value="Nucleic acid-binding proteins"/>
    <property type="match status" value="1"/>
</dbReference>
<dbReference type="HAMAP" id="MF_00075">
    <property type="entry name" value="IF_1"/>
    <property type="match status" value="1"/>
</dbReference>
<dbReference type="InterPro" id="IPR012340">
    <property type="entry name" value="NA-bd_OB-fold"/>
</dbReference>
<dbReference type="InterPro" id="IPR006196">
    <property type="entry name" value="RNA-binding_domain_S1_IF1"/>
</dbReference>
<dbReference type="InterPro" id="IPR003029">
    <property type="entry name" value="S1_domain"/>
</dbReference>
<dbReference type="InterPro" id="IPR004368">
    <property type="entry name" value="TIF_IF1"/>
</dbReference>
<dbReference type="NCBIfam" id="TIGR00008">
    <property type="entry name" value="infA"/>
    <property type="match status" value="1"/>
</dbReference>
<dbReference type="PANTHER" id="PTHR33370">
    <property type="entry name" value="TRANSLATION INITIATION FACTOR IF-1, CHLOROPLASTIC"/>
    <property type="match status" value="1"/>
</dbReference>
<dbReference type="PANTHER" id="PTHR33370:SF1">
    <property type="entry name" value="TRANSLATION INITIATION FACTOR IF-1, CHLOROPLASTIC"/>
    <property type="match status" value="1"/>
</dbReference>
<dbReference type="Pfam" id="PF01176">
    <property type="entry name" value="eIF-1a"/>
    <property type="match status" value="1"/>
</dbReference>
<dbReference type="SMART" id="SM00316">
    <property type="entry name" value="S1"/>
    <property type="match status" value="1"/>
</dbReference>
<dbReference type="SUPFAM" id="SSF50249">
    <property type="entry name" value="Nucleic acid-binding proteins"/>
    <property type="match status" value="1"/>
</dbReference>
<dbReference type="PROSITE" id="PS50832">
    <property type="entry name" value="S1_IF1_TYPE"/>
    <property type="match status" value="1"/>
</dbReference>
<feature type="chain" id="PRO_0000263759" description="Translation initiation factor IF-1">
    <location>
        <begin position="1"/>
        <end position="72"/>
    </location>
</feature>
<feature type="domain" description="S1-like" evidence="1">
    <location>
        <begin position="1"/>
        <end position="72"/>
    </location>
</feature>
<keyword id="KW-0963">Cytoplasm</keyword>
<keyword id="KW-0396">Initiation factor</keyword>
<keyword id="KW-0648">Protein biosynthesis</keyword>
<keyword id="KW-1185">Reference proteome</keyword>
<keyword id="KW-0694">RNA-binding</keyword>
<keyword id="KW-0699">rRNA-binding</keyword>
<organism>
    <name type="scientific">Alkalilimnicola ehrlichii (strain ATCC BAA-1101 / DSM 17681 / MLHE-1)</name>
    <dbReference type="NCBI Taxonomy" id="187272"/>
    <lineage>
        <taxon>Bacteria</taxon>
        <taxon>Pseudomonadati</taxon>
        <taxon>Pseudomonadota</taxon>
        <taxon>Gammaproteobacteria</taxon>
        <taxon>Chromatiales</taxon>
        <taxon>Ectothiorhodospiraceae</taxon>
        <taxon>Alkalilimnicola</taxon>
    </lineage>
</organism>
<gene>
    <name evidence="1" type="primary">infA</name>
    <name type="ordered locus">Mlg_1446</name>
</gene>
<sequence length="72" mass="8247">MAKEESIKMNGTVIETLPNTMFRVELENGHVVTAHISGKMRKHYIRILTGDKVTVELTPYDLSKGRITYRAR</sequence>
<name>IF1_ALKEH</name>
<comment type="function">
    <text evidence="1">One of the essential components for the initiation of protein synthesis. Stabilizes the binding of IF-2 and IF-3 on the 30S subunit to which N-formylmethionyl-tRNA(fMet) subsequently binds. Helps modulate mRNA selection, yielding the 30S pre-initiation complex (PIC). Upon addition of the 50S ribosomal subunit IF-1, IF-2 and IF-3 are released leaving the mature 70S translation initiation complex.</text>
</comment>
<comment type="subunit">
    <text evidence="1">Component of the 30S ribosomal translation pre-initiation complex which assembles on the 30S ribosome in the order IF-2 and IF-3, IF-1 and N-formylmethionyl-tRNA(fMet); mRNA recruitment can occur at any time during PIC assembly.</text>
</comment>
<comment type="subcellular location">
    <subcellularLocation>
        <location evidence="1">Cytoplasm</location>
    </subcellularLocation>
</comment>
<comment type="similarity">
    <text evidence="1">Belongs to the IF-1 family.</text>
</comment>
<proteinExistence type="inferred from homology"/>
<evidence type="ECO:0000255" key="1">
    <source>
        <dbReference type="HAMAP-Rule" id="MF_00075"/>
    </source>
</evidence>
<accession>Q0A8P2</accession>
<protein>
    <recommendedName>
        <fullName evidence="1">Translation initiation factor IF-1</fullName>
    </recommendedName>
</protein>
<reference key="1">
    <citation type="submission" date="2006-08" db="EMBL/GenBank/DDBJ databases">
        <title>Complete sequence of Alkalilimnicola ehrilichei MLHE-1.</title>
        <authorList>
            <person name="Copeland A."/>
            <person name="Lucas S."/>
            <person name="Lapidus A."/>
            <person name="Barry K."/>
            <person name="Detter J.C."/>
            <person name="Glavina del Rio T."/>
            <person name="Hammon N."/>
            <person name="Israni S."/>
            <person name="Dalin E."/>
            <person name="Tice H."/>
            <person name="Pitluck S."/>
            <person name="Sims D."/>
            <person name="Brettin T."/>
            <person name="Bruce D."/>
            <person name="Han C."/>
            <person name="Tapia R."/>
            <person name="Gilna P."/>
            <person name="Schmutz J."/>
            <person name="Larimer F."/>
            <person name="Land M."/>
            <person name="Hauser L."/>
            <person name="Kyrpides N."/>
            <person name="Mikhailova N."/>
            <person name="Oremland R.S."/>
            <person name="Hoeft S.E."/>
            <person name="Switzer-Blum J."/>
            <person name="Kulp T."/>
            <person name="King G."/>
            <person name="Tabita R."/>
            <person name="Witte B."/>
            <person name="Santini J.M."/>
            <person name="Basu P."/>
            <person name="Hollibaugh J.T."/>
            <person name="Xie G."/>
            <person name="Stolz J.F."/>
            <person name="Richardson P."/>
        </authorList>
    </citation>
    <scope>NUCLEOTIDE SEQUENCE [LARGE SCALE GENOMIC DNA]</scope>
    <source>
        <strain>ATCC BAA-1101 / DSM 17681 / MLHE-1</strain>
    </source>
</reference>